<proteinExistence type="evidence at protein level"/>
<protein>
    <recommendedName>
        <fullName>Vascular endothelial growth factor C</fullName>
        <shortName>VEGF-C</shortName>
    </recommendedName>
    <alternativeName>
        <fullName>Flt4 ligand</fullName>
        <shortName>Flt4-L</shortName>
    </alternativeName>
    <alternativeName>
        <fullName>Vascular endothelial growth factor-related protein</fullName>
        <shortName>VRP</shortName>
    </alternativeName>
</protein>
<organism>
    <name type="scientific">Mus musculus</name>
    <name type="common">Mouse</name>
    <dbReference type="NCBI Taxonomy" id="10090"/>
    <lineage>
        <taxon>Eukaryota</taxon>
        <taxon>Metazoa</taxon>
        <taxon>Chordata</taxon>
        <taxon>Craniata</taxon>
        <taxon>Vertebrata</taxon>
        <taxon>Euteleostomi</taxon>
        <taxon>Mammalia</taxon>
        <taxon>Eutheria</taxon>
        <taxon>Euarchontoglires</taxon>
        <taxon>Glires</taxon>
        <taxon>Rodentia</taxon>
        <taxon>Myomorpha</taxon>
        <taxon>Muroidea</taxon>
        <taxon>Muridae</taxon>
        <taxon>Murinae</taxon>
        <taxon>Mus</taxon>
        <taxon>Mus</taxon>
    </lineage>
</organism>
<name>VEGFC_MOUSE</name>
<evidence type="ECO:0000250" key="1"/>
<evidence type="ECO:0000250" key="2">
    <source>
        <dbReference type="UniProtKB" id="P49767"/>
    </source>
</evidence>
<evidence type="ECO:0000255" key="3"/>
<evidence type="ECO:0000269" key="4">
    <source>
    </source>
</evidence>
<evidence type="ECO:0000269" key="5">
    <source>
    </source>
</evidence>
<evidence type="ECO:0000269" key="6">
    <source>
    </source>
</evidence>
<evidence type="ECO:0000303" key="7">
    <source>
    </source>
</evidence>
<evidence type="ECO:0000305" key="8"/>
<dbReference type="EMBL" id="U73620">
    <property type="protein sequence ID" value="AAC52984.1"/>
    <property type="molecule type" value="mRNA"/>
</dbReference>
<dbReference type="EMBL" id="U58112">
    <property type="protein sequence ID" value="AAB46707.1"/>
    <property type="molecule type" value="mRNA"/>
</dbReference>
<dbReference type="EMBL" id="EU862553">
    <property type="protein sequence ID" value="ACJ54375.1"/>
    <property type="molecule type" value="mRNA"/>
</dbReference>
<dbReference type="EMBL" id="EU862554">
    <property type="protein sequence ID" value="ACJ54376.1"/>
    <property type="molecule type" value="mRNA"/>
</dbReference>
<dbReference type="EMBL" id="EU862555">
    <property type="protein sequence ID" value="ACJ54377.1"/>
    <property type="molecule type" value="mRNA"/>
</dbReference>
<dbReference type="EMBL" id="AK047844">
    <property type="protein sequence ID" value="BAC33172.1"/>
    <property type="molecule type" value="mRNA"/>
</dbReference>
<dbReference type="EMBL" id="CH466554">
    <property type="protein sequence ID" value="EDL35638.1"/>
    <property type="molecule type" value="Genomic_DNA"/>
</dbReference>
<dbReference type="EMBL" id="BC096377">
    <property type="protein sequence ID" value="AAH96377.1"/>
    <property type="molecule type" value="mRNA"/>
</dbReference>
<dbReference type="CCDS" id="CCDS22306.1">
    <molecule id="P97953-1"/>
</dbReference>
<dbReference type="RefSeq" id="NP_033532.1">
    <molecule id="P97953-1"/>
    <property type="nucleotide sequence ID" value="NM_009506.2"/>
</dbReference>
<dbReference type="SMR" id="P97953"/>
<dbReference type="BioGRID" id="204514">
    <property type="interactions" value="1"/>
</dbReference>
<dbReference type="DIP" id="DIP-61403N"/>
<dbReference type="FunCoup" id="P97953">
    <property type="interactions" value="1366"/>
</dbReference>
<dbReference type="IntAct" id="P97953">
    <property type="interactions" value="2"/>
</dbReference>
<dbReference type="STRING" id="10090.ENSMUSP00000033919"/>
<dbReference type="GlyCosmos" id="P97953">
    <property type="glycosylation" value="3 sites, No reported glycans"/>
</dbReference>
<dbReference type="GlyGen" id="P97953">
    <property type="glycosylation" value="3 sites, 2 N-linked glycans (2 sites)"/>
</dbReference>
<dbReference type="PhosphoSitePlus" id="P97953"/>
<dbReference type="PaxDb" id="10090-ENSMUSP00000033919"/>
<dbReference type="PeptideAtlas" id="P97953"/>
<dbReference type="ProteomicsDB" id="297877">
    <molecule id="P97953-1"/>
</dbReference>
<dbReference type="ProteomicsDB" id="297878">
    <molecule id="P97953-2"/>
</dbReference>
<dbReference type="ProteomicsDB" id="297879">
    <molecule id="P97953-3"/>
</dbReference>
<dbReference type="Antibodypedia" id="28667">
    <property type="antibodies" value="995 antibodies from 39 providers"/>
</dbReference>
<dbReference type="DNASU" id="22341"/>
<dbReference type="Ensembl" id="ENSMUST00000033919.6">
    <molecule id="P97953-1"/>
    <property type="protein sequence ID" value="ENSMUSP00000033919.5"/>
    <property type="gene ID" value="ENSMUSG00000031520.7"/>
</dbReference>
<dbReference type="Ensembl" id="ENSMUST00000210831.2">
    <molecule id="P97953-2"/>
    <property type="protein sequence ID" value="ENSMUSP00000148210.2"/>
    <property type="gene ID" value="ENSMUSG00000031520.7"/>
</dbReference>
<dbReference type="GeneID" id="22341"/>
<dbReference type="KEGG" id="mmu:22341"/>
<dbReference type="UCSC" id="uc009lsc.1">
    <molecule id="P97953-1"/>
    <property type="organism name" value="mouse"/>
</dbReference>
<dbReference type="UCSC" id="uc029wsy.1">
    <molecule id="P97953-2"/>
    <property type="organism name" value="mouse"/>
</dbReference>
<dbReference type="AGR" id="MGI:109124"/>
<dbReference type="CTD" id="7424"/>
<dbReference type="MGI" id="MGI:109124">
    <property type="gene designation" value="Vegfc"/>
</dbReference>
<dbReference type="VEuPathDB" id="HostDB:ENSMUSG00000031520"/>
<dbReference type="eggNOG" id="ENOG502QVXE">
    <property type="taxonomic scope" value="Eukaryota"/>
</dbReference>
<dbReference type="GeneTree" id="ENSGT00940000156167"/>
<dbReference type="HOGENOM" id="CLU_061712_1_0_1"/>
<dbReference type="InParanoid" id="P97953"/>
<dbReference type="OMA" id="ALPQCQA"/>
<dbReference type="OrthoDB" id="9981160at2759"/>
<dbReference type="PhylomeDB" id="P97953"/>
<dbReference type="TreeFam" id="TF319554"/>
<dbReference type="Reactome" id="R-MMU-114608">
    <property type="pathway name" value="Platelet degranulation"/>
</dbReference>
<dbReference type="Reactome" id="R-MMU-194313">
    <property type="pathway name" value="VEGF ligand-receptor interactions"/>
</dbReference>
<dbReference type="Reactome" id="R-MMU-195399">
    <property type="pathway name" value="VEGF binds to VEGFR leading to receptor dimerization"/>
</dbReference>
<dbReference type="BioGRID-ORCS" id="22341">
    <property type="hits" value="1 hit in 78 CRISPR screens"/>
</dbReference>
<dbReference type="ChiTaRS" id="Vegfc">
    <property type="organism name" value="mouse"/>
</dbReference>
<dbReference type="PRO" id="PR:P97953"/>
<dbReference type="Proteomes" id="UP000000589">
    <property type="component" value="Chromosome 8"/>
</dbReference>
<dbReference type="RNAct" id="P97953">
    <property type="molecule type" value="protein"/>
</dbReference>
<dbReference type="Bgee" id="ENSMUSG00000031520">
    <property type="expression patterns" value="Expressed in brain blood vessel and 226 other cell types or tissues"/>
</dbReference>
<dbReference type="GO" id="GO:0005615">
    <property type="term" value="C:extracellular space"/>
    <property type="evidence" value="ECO:0000314"/>
    <property type="project" value="BHF-UCL"/>
</dbReference>
<dbReference type="GO" id="GO:0016020">
    <property type="term" value="C:membrane"/>
    <property type="evidence" value="ECO:0007669"/>
    <property type="project" value="InterPro"/>
</dbReference>
<dbReference type="GO" id="GO:0042056">
    <property type="term" value="F:chemoattractant activity"/>
    <property type="evidence" value="ECO:0007669"/>
    <property type="project" value="Ensembl"/>
</dbReference>
<dbReference type="GO" id="GO:0008083">
    <property type="term" value="F:growth factor activity"/>
    <property type="evidence" value="ECO:0007669"/>
    <property type="project" value="UniProtKB-KW"/>
</dbReference>
<dbReference type="GO" id="GO:0043185">
    <property type="term" value="F:vascular endothelial growth factor receptor 3 binding"/>
    <property type="evidence" value="ECO:0000353"/>
    <property type="project" value="MGI"/>
</dbReference>
<dbReference type="GO" id="GO:0001525">
    <property type="term" value="P:angiogenesis"/>
    <property type="evidence" value="ECO:0007669"/>
    <property type="project" value="UniProtKB-KW"/>
</dbReference>
<dbReference type="GO" id="GO:0009887">
    <property type="term" value="P:animal organ morphogenesis"/>
    <property type="evidence" value="ECO:0000315"/>
    <property type="project" value="MGI"/>
</dbReference>
<dbReference type="GO" id="GO:0008283">
    <property type="term" value="P:cell population proliferation"/>
    <property type="evidence" value="ECO:0000315"/>
    <property type="project" value="MGI"/>
</dbReference>
<dbReference type="GO" id="GO:1990830">
    <property type="term" value="P:cellular response to leukemia inhibitory factor"/>
    <property type="evidence" value="ECO:0000270"/>
    <property type="project" value="MGI"/>
</dbReference>
<dbReference type="GO" id="GO:0050673">
    <property type="term" value="P:epithelial cell proliferation"/>
    <property type="evidence" value="ECO:0000314"/>
    <property type="project" value="MGI"/>
</dbReference>
<dbReference type="GO" id="GO:0014009">
    <property type="term" value="P:glial cell proliferation"/>
    <property type="evidence" value="ECO:0000315"/>
    <property type="project" value="MGI"/>
</dbReference>
<dbReference type="GO" id="GO:0050930">
    <property type="term" value="P:induction of positive chemotaxis"/>
    <property type="evidence" value="ECO:0007669"/>
    <property type="project" value="Ensembl"/>
</dbReference>
<dbReference type="GO" id="GO:0016331">
    <property type="term" value="P:morphogenesis of embryonic epithelium"/>
    <property type="evidence" value="ECO:0000315"/>
    <property type="project" value="MGI"/>
</dbReference>
<dbReference type="GO" id="GO:0045776">
    <property type="term" value="P:negative regulation of blood pressure"/>
    <property type="evidence" value="ECO:0007669"/>
    <property type="project" value="Ensembl"/>
</dbReference>
<dbReference type="GO" id="GO:0050680">
    <property type="term" value="P:negative regulation of epithelial cell proliferation"/>
    <property type="evidence" value="ECO:0000314"/>
    <property type="project" value="MGI"/>
</dbReference>
<dbReference type="GO" id="GO:0045668">
    <property type="term" value="P:negative regulation of osteoblast differentiation"/>
    <property type="evidence" value="ECO:0000314"/>
    <property type="project" value="CACAO"/>
</dbReference>
<dbReference type="GO" id="GO:0045766">
    <property type="term" value="P:positive regulation of angiogenesis"/>
    <property type="evidence" value="ECO:0000314"/>
    <property type="project" value="BHF-UCL"/>
</dbReference>
<dbReference type="GO" id="GO:0043536">
    <property type="term" value="P:positive regulation of blood vessel endothelial cell migration"/>
    <property type="evidence" value="ECO:0007669"/>
    <property type="project" value="Ensembl"/>
</dbReference>
<dbReference type="GO" id="GO:0051781">
    <property type="term" value="P:positive regulation of cell division"/>
    <property type="evidence" value="ECO:0007669"/>
    <property type="project" value="UniProtKB-KW"/>
</dbReference>
<dbReference type="GO" id="GO:0030335">
    <property type="term" value="P:positive regulation of cell migration"/>
    <property type="evidence" value="ECO:0000314"/>
    <property type="project" value="CACAO"/>
</dbReference>
<dbReference type="GO" id="GO:0008284">
    <property type="term" value="P:positive regulation of cell population proliferation"/>
    <property type="evidence" value="ECO:0000315"/>
    <property type="project" value="MGI"/>
</dbReference>
<dbReference type="GO" id="GO:0001954">
    <property type="term" value="P:positive regulation of cell-matrix adhesion"/>
    <property type="evidence" value="ECO:0000314"/>
    <property type="project" value="MGI"/>
</dbReference>
<dbReference type="GO" id="GO:0050679">
    <property type="term" value="P:positive regulation of epithelial cell proliferation"/>
    <property type="evidence" value="ECO:0007669"/>
    <property type="project" value="Ensembl"/>
</dbReference>
<dbReference type="GO" id="GO:0060252">
    <property type="term" value="P:positive regulation of glial cell proliferation"/>
    <property type="evidence" value="ECO:0000315"/>
    <property type="project" value="MGI"/>
</dbReference>
<dbReference type="GO" id="GO:1901492">
    <property type="term" value="P:positive regulation of lymphangiogenesis"/>
    <property type="evidence" value="ECO:0000314"/>
    <property type="project" value="BHF-UCL"/>
</dbReference>
<dbReference type="GO" id="GO:0060754">
    <property type="term" value="P:positive regulation of mast cell chemotaxis"/>
    <property type="evidence" value="ECO:0007669"/>
    <property type="project" value="Ensembl"/>
</dbReference>
<dbReference type="GO" id="GO:1902462">
    <property type="term" value="P:positive regulation of mesenchymal stem cell proliferation"/>
    <property type="evidence" value="ECO:0000314"/>
    <property type="project" value="CACAO"/>
</dbReference>
<dbReference type="GO" id="GO:0002052">
    <property type="term" value="P:positive regulation of neuroblast proliferation"/>
    <property type="evidence" value="ECO:0000266"/>
    <property type="project" value="MGI"/>
</dbReference>
<dbReference type="GO" id="GO:0045860">
    <property type="term" value="P:positive regulation of protein kinase activity"/>
    <property type="evidence" value="ECO:0000314"/>
    <property type="project" value="CACAO"/>
</dbReference>
<dbReference type="GO" id="GO:0050714">
    <property type="term" value="P:positive regulation of protein secretion"/>
    <property type="evidence" value="ECO:0007669"/>
    <property type="project" value="Ensembl"/>
</dbReference>
<dbReference type="GO" id="GO:0030947">
    <property type="term" value="P:regulation of vascular endothelial growth factor receptor signaling pathway"/>
    <property type="evidence" value="ECO:0007669"/>
    <property type="project" value="Ensembl"/>
</dbReference>
<dbReference type="GO" id="GO:0009410">
    <property type="term" value="P:response to xenobiotic stimulus"/>
    <property type="evidence" value="ECO:0007669"/>
    <property type="project" value="Ensembl"/>
</dbReference>
<dbReference type="GO" id="GO:0048010">
    <property type="term" value="P:vascular endothelial growth factor receptor signaling pathway"/>
    <property type="evidence" value="ECO:0000314"/>
    <property type="project" value="BHF-UCL"/>
</dbReference>
<dbReference type="CDD" id="cd00135">
    <property type="entry name" value="PDGF"/>
    <property type="match status" value="1"/>
</dbReference>
<dbReference type="FunFam" id="2.10.90.10:FF:000025">
    <property type="entry name" value="vascular endothelial growth factor C"/>
    <property type="match status" value="1"/>
</dbReference>
<dbReference type="Gene3D" id="2.10.90.10">
    <property type="entry name" value="Cystine-knot cytokines"/>
    <property type="match status" value="1"/>
</dbReference>
<dbReference type="InterPro" id="IPR004153">
    <property type="entry name" value="CXCXC_repeat"/>
</dbReference>
<dbReference type="InterPro" id="IPR029034">
    <property type="entry name" value="Cystine-knot_cytokine"/>
</dbReference>
<dbReference type="InterPro" id="IPR023581">
    <property type="entry name" value="PD_growth_factor_CS"/>
</dbReference>
<dbReference type="InterPro" id="IPR000072">
    <property type="entry name" value="PDGF/VEGF_dom"/>
</dbReference>
<dbReference type="InterPro" id="IPR050507">
    <property type="entry name" value="PDGF/VEGF_growth_factor"/>
</dbReference>
<dbReference type="PANTHER" id="PTHR12025">
    <property type="entry name" value="VASCULAR ENDOTHELIAL GROWTH FACTOR"/>
    <property type="match status" value="1"/>
</dbReference>
<dbReference type="PANTHER" id="PTHR12025:SF3">
    <property type="entry name" value="VASCULAR ENDOTHELIAL GROWTH FACTOR C"/>
    <property type="match status" value="1"/>
</dbReference>
<dbReference type="Pfam" id="PF03128">
    <property type="entry name" value="CXCXC"/>
    <property type="match status" value="3"/>
</dbReference>
<dbReference type="Pfam" id="PF00341">
    <property type="entry name" value="PDGF"/>
    <property type="match status" value="1"/>
</dbReference>
<dbReference type="SMART" id="SM00141">
    <property type="entry name" value="PDGF"/>
    <property type="match status" value="1"/>
</dbReference>
<dbReference type="SUPFAM" id="SSF57501">
    <property type="entry name" value="Cystine-knot cytokines"/>
    <property type="match status" value="1"/>
</dbReference>
<dbReference type="PROSITE" id="PS00249">
    <property type="entry name" value="PDGF_1"/>
    <property type="match status" value="1"/>
</dbReference>
<dbReference type="PROSITE" id="PS50278">
    <property type="entry name" value="PDGF_2"/>
    <property type="match status" value="1"/>
</dbReference>
<reference key="1">
    <citation type="journal article" date="1996" name="Development">
        <title>VEGF-C receptor binding and pattern of expression with VEGFR-3 suggests a role in lymphatic vascular development.</title>
        <authorList>
            <person name="Kukk E."/>
            <person name="Lymboussaki A."/>
            <person name="Taira S."/>
            <person name="Kaipainen A."/>
            <person name="Jeltsch M."/>
            <person name="Joukov V."/>
            <person name="Alitalo K."/>
        </authorList>
    </citation>
    <scope>NUCLEOTIDE SEQUENCE [MRNA] (ISOFORM 1)</scope>
    <scope>FUNCTION</scope>
    <scope>TISSUE SPECIFICITY</scope>
    <scope>DEVELOPMENTAL STAGE</scope>
    <source>
        <strain>BALB/cJ</strain>
    </source>
</reference>
<reference key="2">
    <citation type="journal article" date="1997" name="Oncogene">
        <title>Characterization of murine Flt4 ligand/VEGF-C.</title>
        <authorList>
            <person name="Fitz L.J."/>
            <person name="Morris J.C."/>
            <person name="Towler P."/>
            <person name="Long A."/>
            <person name="Burgess P."/>
            <person name="Greco R."/>
            <person name="Wang J."/>
            <person name="Gassaway R."/>
            <person name="Nickbarg E."/>
            <person name="Kovacic S."/>
            <person name="Ciarletta A."/>
            <person name="Giannotti J."/>
            <person name="Finnerty H."/>
            <person name="Zollner R."/>
            <person name="Beier D.R."/>
            <person name="Leak L.V."/>
            <person name="Turner K.J."/>
            <person name="Wood C.R."/>
        </authorList>
    </citation>
    <scope>NUCLEOTIDE SEQUENCE [MRNA] (ISOFORM 1)</scope>
    <scope>PROTEIN SEQUENCE OF 108-126</scope>
    <scope>FUNCTION</scope>
    <scope>SUBUNIT</scope>
    <scope>TISSUE SPECIFICITY</scope>
    <source>
        <strain>BALB/cJ</strain>
    </source>
</reference>
<reference key="3">
    <citation type="journal article" date="2010" name="Biochem. J.">
        <title>Characterization of novel VEGF (vascular endothelial growth factor)-C splicing isoforms from mouse.</title>
        <authorList>
            <person name="Wang Z.G."/>
            <person name="Puri T.S."/>
            <person name="Quigg R.J."/>
        </authorList>
    </citation>
    <scope>NUCLEOTIDE SEQUENCE [MRNA] (ISOFORMS 2; 3 AND 4)</scope>
    <scope>TISSUE SPECIFICITY</scope>
    <source>
        <tissue>Kidney proximal tubule</tissue>
    </source>
</reference>
<reference key="4">
    <citation type="journal article" date="2005" name="Science">
        <title>The transcriptional landscape of the mammalian genome.</title>
        <authorList>
            <person name="Carninci P."/>
            <person name="Kasukawa T."/>
            <person name="Katayama S."/>
            <person name="Gough J."/>
            <person name="Frith M.C."/>
            <person name="Maeda N."/>
            <person name="Oyama R."/>
            <person name="Ravasi T."/>
            <person name="Lenhard B."/>
            <person name="Wells C."/>
            <person name="Kodzius R."/>
            <person name="Shimokawa K."/>
            <person name="Bajic V.B."/>
            <person name="Brenner S.E."/>
            <person name="Batalov S."/>
            <person name="Forrest A.R."/>
            <person name="Zavolan M."/>
            <person name="Davis M.J."/>
            <person name="Wilming L.G."/>
            <person name="Aidinis V."/>
            <person name="Allen J.E."/>
            <person name="Ambesi-Impiombato A."/>
            <person name="Apweiler R."/>
            <person name="Aturaliya R.N."/>
            <person name="Bailey T.L."/>
            <person name="Bansal M."/>
            <person name="Baxter L."/>
            <person name="Beisel K.W."/>
            <person name="Bersano T."/>
            <person name="Bono H."/>
            <person name="Chalk A.M."/>
            <person name="Chiu K.P."/>
            <person name="Choudhary V."/>
            <person name="Christoffels A."/>
            <person name="Clutterbuck D.R."/>
            <person name="Crowe M.L."/>
            <person name="Dalla E."/>
            <person name="Dalrymple B.P."/>
            <person name="de Bono B."/>
            <person name="Della Gatta G."/>
            <person name="di Bernardo D."/>
            <person name="Down T."/>
            <person name="Engstrom P."/>
            <person name="Fagiolini M."/>
            <person name="Faulkner G."/>
            <person name="Fletcher C.F."/>
            <person name="Fukushima T."/>
            <person name="Furuno M."/>
            <person name="Futaki S."/>
            <person name="Gariboldi M."/>
            <person name="Georgii-Hemming P."/>
            <person name="Gingeras T.R."/>
            <person name="Gojobori T."/>
            <person name="Green R.E."/>
            <person name="Gustincich S."/>
            <person name="Harbers M."/>
            <person name="Hayashi Y."/>
            <person name="Hensch T.K."/>
            <person name="Hirokawa N."/>
            <person name="Hill D."/>
            <person name="Huminiecki L."/>
            <person name="Iacono M."/>
            <person name="Ikeo K."/>
            <person name="Iwama A."/>
            <person name="Ishikawa T."/>
            <person name="Jakt M."/>
            <person name="Kanapin A."/>
            <person name="Katoh M."/>
            <person name="Kawasawa Y."/>
            <person name="Kelso J."/>
            <person name="Kitamura H."/>
            <person name="Kitano H."/>
            <person name="Kollias G."/>
            <person name="Krishnan S.P."/>
            <person name="Kruger A."/>
            <person name="Kummerfeld S.K."/>
            <person name="Kurochkin I.V."/>
            <person name="Lareau L.F."/>
            <person name="Lazarevic D."/>
            <person name="Lipovich L."/>
            <person name="Liu J."/>
            <person name="Liuni S."/>
            <person name="McWilliam S."/>
            <person name="Madan Babu M."/>
            <person name="Madera M."/>
            <person name="Marchionni L."/>
            <person name="Matsuda H."/>
            <person name="Matsuzawa S."/>
            <person name="Miki H."/>
            <person name="Mignone F."/>
            <person name="Miyake S."/>
            <person name="Morris K."/>
            <person name="Mottagui-Tabar S."/>
            <person name="Mulder N."/>
            <person name="Nakano N."/>
            <person name="Nakauchi H."/>
            <person name="Ng P."/>
            <person name="Nilsson R."/>
            <person name="Nishiguchi S."/>
            <person name="Nishikawa S."/>
            <person name="Nori F."/>
            <person name="Ohara O."/>
            <person name="Okazaki Y."/>
            <person name="Orlando V."/>
            <person name="Pang K.C."/>
            <person name="Pavan W.J."/>
            <person name="Pavesi G."/>
            <person name="Pesole G."/>
            <person name="Petrovsky N."/>
            <person name="Piazza S."/>
            <person name="Reed J."/>
            <person name="Reid J.F."/>
            <person name="Ring B.Z."/>
            <person name="Ringwald M."/>
            <person name="Rost B."/>
            <person name="Ruan Y."/>
            <person name="Salzberg S.L."/>
            <person name="Sandelin A."/>
            <person name="Schneider C."/>
            <person name="Schoenbach C."/>
            <person name="Sekiguchi K."/>
            <person name="Semple C.A."/>
            <person name="Seno S."/>
            <person name="Sessa L."/>
            <person name="Sheng Y."/>
            <person name="Shibata Y."/>
            <person name="Shimada H."/>
            <person name="Shimada K."/>
            <person name="Silva D."/>
            <person name="Sinclair B."/>
            <person name="Sperling S."/>
            <person name="Stupka E."/>
            <person name="Sugiura K."/>
            <person name="Sultana R."/>
            <person name="Takenaka Y."/>
            <person name="Taki K."/>
            <person name="Tammoja K."/>
            <person name="Tan S.L."/>
            <person name="Tang S."/>
            <person name="Taylor M.S."/>
            <person name="Tegner J."/>
            <person name="Teichmann S.A."/>
            <person name="Ueda H.R."/>
            <person name="van Nimwegen E."/>
            <person name="Verardo R."/>
            <person name="Wei C.L."/>
            <person name="Yagi K."/>
            <person name="Yamanishi H."/>
            <person name="Zabarovsky E."/>
            <person name="Zhu S."/>
            <person name="Zimmer A."/>
            <person name="Hide W."/>
            <person name="Bult C."/>
            <person name="Grimmond S.M."/>
            <person name="Teasdale R.D."/>
            <person name="Liu E.T."/>
            <person name="Brusic V."/>
            <person name="Quackenbush J."/>
            <person name="Wahlestedt C."/>
            <person name="Mattick J.S."/>
            <person name="Hume D.A."/>
            <person name="Kai C."/>
            <person name="Sasaki D."/>
            <person name="Tomaru Y."/>
            <person name="Fukuda S."/>
            <person name="Kanamori-Katayama M."/>
            <person name="Suzuki M."/>
            <person name="Aoki J."/>
            <person name="Arakawa T."/>
            <person name="Iida J."/>
            <person name="Imamura K."/>
            <person name="Itoh M."/>
            <person name="Kato T."/>
            <person name="Kawaji H."/>
            <person name="Kawagashira N."/>
            <person name="Kawashima T."/>
            <person name="Kojima M."/>
            <person name="Kondo S."/>
            <person name="Konno H."/>
            <person name="Nakano K."/>
            <person name="Ninomiya N."/>
            <person name="Nishio T."/>
            <person name="Okada M."/>
            <person name="Plessy C."/>
            <person name="Shibata K."/>
            <person name="Shiraki T."/>
            <person name="Suzuki S."/>
            <person name="Tagami M."/>
            <person name="Waki K."/>
            <person name="Watahiki A."/>
            <person name="Okamura-Oho Y."/>
            <person name="Suzuki H."/>
            <person name="Kawai J."/>
            <person name="Hayashizaki Y."/>
        </authorList>
    </citation>
    <scope>NUCLEOTIDE SEQUENCE [LARGE SCALE MRNA] (ISOFORM 1)</scope>
    <source>
        <strain>C57BL/6J</strain>
        <tissue>Head</tissue>
    </source>
</reference>
<reference key="5">
    <citation type="submission" date="2005-07" db="EMBL/GenBank/DDBJ databases">
        <authorList>
            <person name="Mural R.J."/>
            <person name="Adams M.D."/>
            <person name="Myers E.W."/>
            <person name="Smith H.O."/>
            <person name="Venter J.C."/>
        </authorList>
    </citation>
    <scope>NUCLEOTIDE SEQUENCE [LARGE SCALE GENOMIC DNA]</scope>
</reference>
<reference key="6">
    <citation type="journal article" date="2004" name="Genome Res.">
        <title>The status, quality, and expansion of the NIH full-length cDNA project: the Mammalian Gene Collection (MGC).</title>
        <authorList>
            <consortium name="The MGC Project Team"/>
        </authorList>
    </citation>
    <scope>NUCLEOTIDE SEQUENCE [LARGE SCALE MRNA] (ISOFORM 1)</scope>
    <source>
        <strain>FVB/N-3</strain>
        <tissue>Mammary tumor</tissue>
    </source>
</reference>
<feature type="signal peptide" evidence="1">
    <location>
        <begin position="1"/>
        <end position="31"/>
    </location>
</feature>
<feature type="propeptide" id="PRO_0000023403" evidence="3">
    <location>
        <begin position="32"/>
        <end position="107"/>
    </location>
</feature>
<feature type="chain" id="PRO_0000023404" description="Vascular endothelial growth factor C">
    <location>
        <begin position="108"/>
        <end position="223"/>
    </location>
</feature>
<feature type="propeptide" id="PRO_0000023405" evidence="3">
    <location>
        <begin position="224"/>
        <end position="415"/>
    </location>
</feature>
<feature type="repeat" description="1">
    <location>
        <begin position="276"/>
        <end position="291"/>
    </location>
</feature>
<feature type="repeat" description="2">
    <location>
        <begin position="300"/>
        <end position="315"/>
    </location>
</feature>
<feature type="repeat" description="3">
    <location>
        <begin position="324"/>
        <end position="339"/>
    </location>
</feature>
<feature type="repeat" description="4">
    <location>
        <begin position="343"/>
        <end position="358"/>
    </location>
</feature>
<feature type="region of interest" description="4 X 16 AA repeats of C-X(10)-C-X-C-X(1,3)-C">
    <location>
        <begin position="276"/>
        <end position="358"/>
    </location>
</feature>
<feature type="glycosylation site" description="N-linked (GlcNAc...) asparagine" evidence="3">
    <location>
        <position position="171"/>
    </location>
</feature>
<feature type="glycosylation site" description="N-linked (GlcNAc...) asparagine" evidence="3">
    <location>
        <position position="201"/>
    </location>
</feature>
<feature type="glycosylation site" description="N-linked (GlcNAc...) asparagine" evidence="3">
    <location>
        <position position="236"/>
    </location>
</feature>
<feature type="disulfide bond" evidence="2">
    <location>
        <begin position="127"/>
        <end position="169"/>
    </location>
</feature>
<feature type="disulfide bond" description="Interchain" evidence="2">
    <location>
        <position position="152"/>
    </location>
</feature>
<feature type="disulfide bond" evidence="2">
    <location>
        <begin position="158"/>
        <end position="205"/>
    </location>
</feature>
<feature type="disulfide bond" description="Interchain" evidence="2">
    <location>
        <position position="161"/>
    </location>
</feature>
<feature type="disulfide bond" evidence="2">
    <location>
        <begin position="162"/>
        <end position="207"/>
    </location>
</feature>
<feature type="splice variant" id="VSP_053477" description="In isoform 4." evidence="7">
    <original>AFEGKDLEEQLRS</original>
    <variation>LLQKTVCESTEAL</variation>
    <location>
        <begin position="50"/>
        <end position="62"/>
    </location>
</feature>
<feature type="splice variant" id="VSP_053478" description="In isoform 4." evidence="7">
    <location>
        <begin position="63"/>
        <end position="129"/>
    </location>
</feature>
<feature type="splice variant" id="VSP_053479" description="In isoform 3." evidence="7">
    <original>SIDNEWRKTQCMP</original>
    <variation>NVGVAATARGCSA</variation>
    <location>
        <begin position="117"/>
        <end position="129"/>
    </location>
</feature>
<feature type="splice variant" id="VSP_053480" description="In isoform 3 and isoform 4." evidence="7">
    <location>
        <begin position="130"/>
        <end position="184"/>
    </location>
</feature>
<feature type="splice variant" id="VSP_053481" description="In isoform 2." evidence="7">
    <original>LFEI</original>
    <variation>VSGS</variation>
    <location>
        <begin position="181"/>
        <end position="184"/>
    </location>
</feature>
<feature type="splice variant" id="VSP_053482" description="In isoform 2, isoform 3 and isoform 4." evidence="7">
    <location>
        <begin position="185"/>
        <end position="415"/>
    </location>
</feature>
<sequence length="415" mass="46471">MHLLCFLSLACSLLAAALIPSPREAPATVAAFESGLGFSEAEPDGGEVKAFEGKDLEEQLRSVSSVDELMSVLYPDYWKMYKCQLRKGGWQQPTLNTRTGDSVKFAAAHYNTEILKSIDNEWRKTQCMPREVCIDVGKEFGAATNTFFKPPCVSVYRCGGCCNSEGLQCMNTSTGYLSKTLFEITVPLSQGPKPVTISFANHTSCRCMSKLDVYRQVHSIIRRSLPATLPQCQAANKTCPTNYVWNNYMCRCLAQQDFIFYSNVEDDSTNGFHDVCGPNKELDEDTCQCVCKGGLRPSSCGPHKELDRDSCQCVCKNKLFPNSCGANREFDENTCQCVCKRTCPRNQPLNPGKCACECTENTQKCFLKGKKFHHQTCSCYRRPCANRLKHCDPGLSFSEEVCRCVPSYWKRPHLN</sequence>
<comment type="function">
    <text evidence="5 6">Growth factor active in angiogenesis, and endothelial cell growth, stimulating their proliferation and migration and also has effects on the permeability of blood vessels. May function in angiogenesis of the venous and lymphatic vascular systems during embryogenesis, and also in the maintenance of differentiated lymphatic endothelium in adults. Binds and activates KDR/VEGFR2 and FLT4/VEGFR3 receptors.</text>
</comment>
<comment type="subunit">
    <text evidence="2 6">Homodimer; non-covalent and antiparallel (PubMed:9247316). Interacts with FLT4/VEGFR3; the interaction is required for FLT4/VEGFR3 homodimarization and activation (By similarity).</text>
</comment>
<comment type="interaction">
    <interactant intactId="EBI-16148671">
        <id>P97953-1</id>
    </interactant>
    <interactant intactId="EBI-12586256">
        <id>O60462</id>
        <label>NRP2</label>
    </interactant>
    <organismsDiffer>true</organismsDiffer>
    <experiments>3</experiments>
</comment>
<comment type="subcellular location">
    <subcellularLocation>
        <location>Secreted</location>
    </subcellularLocation>
</comment>
<comment type="alternative products">
    <event type="alternative splicing"/>
    <isoform>
        <id>P97953-1</id>
        <name>1</name>
        <name>Vegf-C</name>
        <sequence type="displayed"/>
    </isoform>
    <isoform>
        <id>P97953-2</id>
        <name>2</name>
        <name>Vegf-C184</name>
        <sequence type="described" ref="VSP_053481 VSP_053482"/>
    </isoform>
    <isoform>
        <id>P97953-3</id>
        <name>3</name>
        <name>Vegf-C129</name>
        <sequence type="described" ref="VSP_053479 VSP_053480 VSP_053482"/>
    </isoform>
    <isoform>
        <id>P97953-4</id>
        <name>4</name>
        <name>Vegf-C62</name>
        <sequence type="described" ref="VSP_053477 VSP_053478 VSP_053480 VSP_053482"/>
    </isoform>
</comment>
<comment type="tissue specificity">
    <text evidence="4 5 6">Expressed in adult heart, brain, spleen, lung, liver, skeletal muscle, kidney, testis and intestine with higher levels in heart, brain and kidney. Isoform 4 levels are very low. Isoform 3 is mostly expressed in liver and has reduced expression level in other tissues. Isoform 2 is mostly expressed in brain and kidney, although a lower level expression in other tissues is also detectable.</text>
</comment>
<comment type="developmental stage">
    <text evidence="5">Expression detected in mesenchymal cells of postimplantation embryos, particularly in the regions where the lymphatic vessels undergo sprouting from embryonic veins, such as the perimetanephric, axillary and jugular regions, and in the developing mesenterium. Also detected between vertebral corpuscles, in lung mesenchyme, in neck region and in developing forehead. Not detected in the blood islands of the yolk sac.</text>
</comment>
<comment type="PTM">
    <text evidence="1">Undergoes a complex proteolytic maturation which generates a variety of processed secreted forms with increased activity toward VEGFR-3, but only the fully processed form could activate VEGFR-2. VEGF-C first form an antiparallel homodimer linked by disulfide bonds. Before secretion, a cleavage occurs between Arg-223 and Ser-224 producing a heterotetramer. The next extracellular step of the processing removes the N-terminal propeptide. Finally the mature VEGF-C is composed mostly of two VEGF homology domains (VHDs) bound by non-covalent interactions (By similarity).</text>
</comment>
<comment type="similarity">
    <text evidence="8">Belongs to the PDGF/VEGF growth factor family.</text>
</comment>
<accession>P97953</accession>
<accession>C6F5S8</accession>
<accession>C6F5S9</accession>
<accession>C6F5T0</accession>
<accession>Q543R6</accession>
<keyword id="KW-0025">Alternative splicing</keyword>
<keyword id="KW-0037">Angiogenesis</keyword>
<keyword id="KW-0165">Cleavage on pair of basic residues</keyword>
<keyword id="KW-0217">Developmental protein</keyword>
<keyword id="KW-0221">Differentiation</keyword>
<keyword id="KW-0903">Direct protein sequencing</keyword>
<keyword id="KW-1015">Disulfide bond</keyword>
<keyword id="KW-0325">Glycoprotein</keyword>
<keyword id="KW-0339">Growth factor</keyword>
<keyword id="KW-0497">Mitogen</keyword>
<keyword id="KW-1185">Reference proteome</keyword>
<keyword id="KW-0677">Repeat</keyword>
<keyword id="KW-0964">Secreted</keyword>
<keyword id="KW-0732">Signal</keyword>
<gene>
    <name type="primary">Vegfc</name>
</gene>